<reference key="1">
    <citation type="journal article" date="1998" name="Biochim. Biophys. Acta">
        <title>Molecular cloning of mouse choline kinase and choline/ethanolamine kinase: their sequence comparison to the respective rat homologs.</title>
        <authorList>
            <person name="Aoyama C."/>
            <person name="Nakashima K."/>
            <person name="Ishidate K."/>
        </authorList>
    </citation>
    <scope>NUCLEOTIDE SEQUENCE [MRNA]</scope>
    <source>
        <strain>Swiss Webster / NIH</strain>
    </source>
</reference>
<reference key="2">
    <citation type="journal article" date="2006" name="Biochim. Biophys. Acta">
        <title>Deletion and alanine mutation analyses for the formation of active homo- or hetero-dimer complexes of mouse choline kinase-alpha and -beta.</title>
        <authorList>
            <person name="Liao H."/>
            <person name="Aoyama C."/>
            <person name="Ishidate K."/>
            <person name="Teraoka H."/>
        </authorList>
    </citation>
    <scope>SUBUNIT</scope>
</reference>
<reference key="3">
    <citation type="journal article" date="2006" name="J. Biol. Chem.">
        <title>A rostrocaudal muscular dystrophy caused by a defect in choline kinase beta, the first enzyme in phosphatidylcholine biosynthesis.</title>
        <authorList>
            <person name="Sher R.B."/>
            <person name="Aoyama C."/>
            <person name="Huebsch K.A."/>
            <person name="Ji S."/>
            <person name="Kerner J."/>
            <person name="Yang Y."/>
            <person name="Frankel W.N."/>
            <person name="Hoppel C.L."/>
            <person name="Wood P.A."/>
            <person name="Vance D.E."/>
            <person name="Cox G.A."/>
        </authorList>
    </citation>
    <scope>DISEASE</scope>
</reference>
<reference key="4">
    <citation type="journal article" date="2009" name="Biochim. Biophys. Acta">
        <title>Understanding the muscular dystrophy caused by deletion of choline kinase beta in mice.</title>
        <authorList>
            <person name="Wu G."/>
            <person name="Sher R.B."/>
            <person name="Cox G.A."/>
            <person name="Vance D.E."/>
        </authorList>
    </citation>
    <scope>DISRUPTION PHENOTYPE</scope>
</reference>
<reference key="5">
    <citation type="journal article" date="2010" name="Cell">
        <title>A tissue-specific atlas of mouse protein phosphorylation and expression.</title>
        <authorList>
            <person name="Huttlin E.L."/>
            <person name="Jedrychowski M.P."/>
            <person name="Elias J.E."/>
            <person name="Goswami T."/>
            <person name="Rad R."/>
            <person name="Beausoleil S.A."/>
            <person name="Villen J."/>
            <person name="Haas W."/>
            <person name="Sowa M.E."/>
            <person name="Gygi S.P."/>
        </authorList>
    </citation>
    <scope>IDENTIFICATION BY MASS SPECTROMETRY [LARGE SCALE ANALYSIS]</scope>
    <source>
        <tissue>Brain</tissue>
        <tissue>Kidney</tissue>
        <tissue>Liver</tissue>
        <tissue>Pancreas</tissue>
        <tissue>Spleen</tissue>
        <tissue>Testis</tissue>
    </source>
</reference>
<sequence length="394" mass="45126">MAADGTGVVGGGAVGGGLPKDGLQDAKCPEPIPNRRRASSLSRDAQRRAYQWCREYLGGAWRRARPEELSVCPVSGGLSNLLFRCSLPNHVPSVGGEPREVLLRLYGAILQGVDSLVLESVMFAILAERSLGPQLYGVFPEGRLEQYLPSRPLKTQELRDPVLSGAIATRMARFHGMEMPFTKEPRWLFGTMERYLKQIQDLPSTSLPQMNLVEMYSLKDEMNSLRKLLDDTPSPVVFCHNDIQEGNILLLSEPDSDDNLMLVDFEYSSYNYRGFDIGNHFCEWVYDYTYEEWPFYKARPTDYPTREQQLHFIRHYLAEVQKGEILSEEEQKKREEELLLEISRYSLASHFFWGLWSTLQASMSTIEFGYLEYAQSRFQFYFQQKGQLTSSPSS</sequence>
<keyword id="KW-0007">Acetylation</keyword>
<keyword id="KW-0067">ATP-binding</keyword>
<keyword id="KW-0418">Kinase</keyword>
<keyword id="KW-0444">Lipid biosynthesis</keyword>
<keyword id="KW-0443">Lipid metabolism</keyword>
<keyword id="KW-0547">Nucleotide-binding</keyword>
<keyword id="KW-0594">Phospholipid biosynthesis</keyword>
<keyword id="KW-1208">Phospholipid metabolism</keyword>
<keyword id="KW-1185">Reference proteome</keyword>
<keyword id="KW-0808">Transferase</keyword>
<evidence type="ECO:0000250" key="1"/>
<evidence type="ECO:0000250" key="2">
    <source>
        <dbReference type="UniProtKB" id="Q9Y259"/>
    </source>
</evidence>
<evidence type="ECO:0000256" key="3">
    <source>
        <dbReference type="SAM" id="MobiDB-lite"/>
    </source>
</evidence>
<evidence type="ECO:0000269" key="4">
    <source>
    </source>
</evidence>
<evidence type="ECO:0000269" key="5">
    <source>
    </source>
</evidence>
<evidence type="ECO:0000269" key="6">
    <source>
    </source>
</evidence>
<evidence type="ECO:0000305" key="7"/>
<organism>
    <name type="scientific">Mus musculus</name>
    <name type="common">Mouse</name>
    <dbReference type="NCBI Taxonomy" id="10090"/>
    <lineage>
        <taxon>Eukaryota</taxon>
        <taxon>Metazoa</taxon>
        <taxon>Chordata</taxon>
        <taxon>Craniata</taxon>
        <taxon>Vertebrata</taxon>
        <taxon>Euteleostomi</taxon>
        <taxon>Mammalia</taxon>
        <taxon>Eutheria</taxon>
        <taxon>Euarchontoglires</taxon>
        <taxon>Glires</taxon>
        <taxon>Rodentia</taxon>
        <taxon>Myomorpha</taxon>
        <taxon>Muroidea</taxon>
        <taxon>Muridae</taxon>
        <taxon>Murinae</taxon>
        <taxon>Mus</taxon>
        <taxon>Mus</taxon>
    </lineage>
</organism>
<feature type="initiator methionine" description="Removed" evidence="2">
    <location>
        <position position="1"/>
    </location>
</feature>
<feature type="chain" id="PRO_0000206223" description="Choline/ethanolamine kinase">
    <location>
        <begin position="2"/>
        <end position="394"/>
    </location>
</feature>
<feature type="region of interest" description="Disordered" evidence="3">
    <location>
        <begin position="1"/>
        <end position="42"/>
    </location>
</feature>
<feature type="compositionally biased region" description="Gly residues" evidence="3">
    <location>
        <begin position="7"/>
        <end position="19"/>
    </location>
</feature>
<feature type="binding site" evidence="1">
    <location>
        <begin position="75"/>
        <end position="81"/>
    </location>
    <ligand>
        <name>ATP</name>
        <dbReference type="ChEBI" id="CHEBI:30616"/>
    </ligand>
</feature>
<feature type="binding site" evidence="1">
    <location>
        <begin position="77"/>
        <end position="79"/>
    </location>
    <ligand>
        <name>substrate</name>
    </ligand>
</feature>
<feature type="binding site" evidence="1">
    <location>
        <position position="104"/>
    </location>
    <ligand>
        <name>ATP</name>
        <dbReference type="ChEBI" id="CHEBI:30616"/>
    </ligand>
</feature>
<feature type="binding site" evidence="1">
    <location>
        <begin position="146"/>
        <end position="152"/>
    </location>
    <ligand>
        <name>ATP</name>
        <dbReference type="ChEBI" id="CHEBI:30616"/>
    </ligand>
</feature>
<feature type="binding site" evidence="1">
    <location>
        <position position="244"/>
    </location>
    <ligand>
        <name>ATP</name>
        <dbReference type="ChEBI" id="CHEBI:30616"/>
    </ligand>
</feature>
<feature type="binding site" evidence="1">
    <location>
        <position position="264"/>
    </location>
    <ligand>
        <name>ATP</name>
        <dbReference type="ChEBI" id="CHEBI:30616"/>
    </ligand>
</feature>
<feature type="modified residue" description="N-acetylalanine" evidence="2">
    <location>
        <position position="2"/>
    </location>
</feature>
<protein>
    <recommendedName>
        <fullName>Choline/ethanolamine kinase</fullName>
    </recommendedName>
    <alternativeName>
        <fullName>Choline kinase beta</fullName>
        <shortName>CK</shortName>
        <shortName>CKB</shortName>
        <ecNumber evidence="2">2.7.1.32</ecNumber>
    </alternativeName>
    <alternativeName>
        <fullName>Ethanolamine kinase</fullName>
        <shortName>EK</shortName>
        <ecNumber evidence="2">2.7.1.82</ecNumber>
    </alternativeName>
    <alternativeName>
        <fullName>choline/ethanolamine kinase beta</fullName>
        <shortName>CKEKB</shortName>
    </alternativeName>
</protein>
<dbReference type="EC" id="2.7.1.32" evidence="2"/>
<dbReference type="EC" id="2.7.1.82" evidence="2"/>
<dbReference type="EMBL" id="AB011001">
    <property type="protein sequence ID" value="BAA24897.1"/>
    <property type="molecule type" value="Transcribed_RNA"/>
</dbReference>
<dbReference type="EMBL" id="AB011000">
    <property type="protein sequence ID" value="BAA24896.1"/>
    <property type="molecule type" value="mRNA"/>
</dbReference>
<dbReference type="CCDS" id="CCDS27750.1"/>
<dbReference type="RefSeq" id="NP_031718.1">
    <property type="nucleotide sequence ID" value="NM_007692.6"/>
</dbReference>
<dbReference type="SMR" id="O55229"/>
<dbReference type="BioGRID" id="198695">
    <property type="interactions" value="2"/>
</dbReference>
<dbReference type="FunCoup" id="O55229">
    <property type="interactions" value="745"/>
</dbReference>
<dbReference type="IntAct" id="O55229">
    <property type="interactions" value="1"/>
</dbReference>
<dbReference type="STRING" id="10090.ENSMUSP00000023289"/>
<dbReference type="iPTMnet" id="O55229"/>
<dbReference type="PhosphoSitePlus" id="O55229"/>
<dbReference type="SwissPalm" id="O55229"/>
<dbReference type="jPOST" id="O55229"/>
<dbReference type="PaxDb" id="10090-ENSMUSP00000023289"/>
<dbReference type="PeptideAtlas" id="O55229"/>
<dbReference type="ProteomicsDB" id="281212"/>
<dbReference type="Pumba" id="O55229"/>
<dbReference type="DNASU" id="12651"/>
<dbReference type="Ensembl" id="ENSMUST00000023289.13">
    <property type="protein sequence ID" value="ENSMUSP00000023289.7"/>
    <property type="gene ID" value="ENSMUSG00000022617.16"/>
</dbReference>
<dbReference type="GeneID" id="12651"/>
<dbReference type="KEGG" id="mmu:12651"/>
<dbReference type="UCSC" id="uc007xgs.2">
    <property type="organism name" value="mouse"/>
</dbReference>
<dbReference type="AGR" id="MGI:1328313"/>
<dbReference type="CTD" id="1120"/>
<dbReference type="MGI" id="MGI:1328313">
    <property type="gene designation" value="Chkb"/>
</dbReference>
<dbReference type="VEuPathDB" id="HostDB:ENSMUSG00000022617"/>
<dbReference type="eggNOG" id="KOG2686">
    <property type="taxonomic scope" value="Eukaryota"/>
</dbReference>
<dbReference type="GeneTree" id="ENSGT00950000182939"/>
<dbReference type="HOGENOM" id="CLU_012712_2_1_1"/>
<dbReference type="InParanoid" id="O55229"/>
<dbReference type="OMA" id="IETSIDY"/>
<dbReference type="OrthoDB" id="3649325at2759"/>
<dbReference type="PhylomeDB" id="O55229"/>
<dbReference type="TreeFam" id="TF313549"/>
<dbReference type="Reactome" id="R-MMU-1483191">
    <property type="pathway name" value="Synthesis of PC"/>
</dbReference>
<dbReference type="Reactome" id="R-MMU-1483213">
    <property type="pathway name" value="Synthesis of PE"/>
</dbReference>
<dbReference type="UniPathway" id="UPA00558">
    <property type="reaction ID" value="UER00741"/>
</dbReference>
<dbReference type="BioGRID-ORCS" id="12651">
    <property type="hits" value="0 hits in 79 CRISPR screens"/>
</dbReference>
<dbReference type="PRO" id="PR:O55229"/>
<dbReference type="Proteomes" id="UP000000589">
    <property type="component" value="Chromosome 15"/>
</dbReference>
<dbReference type="RNAct" id="O55229">
    <property type="molecule type" value="protein"/>
</dbReference>
<dbReference type="Bgee" id="ENSMUSG00000022617">
    <property type="expression patterns" value="Expressed in islet of Langerhans and 96 other cell types or tissues"/>
</dbReference>
<dbReference type="ExpressionAtlas" id="O55229">
    <property type="expression patterns" value="baseline and differential"/>
</dbReference>
<dbReference type="GO" id="GO:0005524">
    <property type="term" value="F:ATP binding"/>
    <property type="evidence" value="ECO:0007669"/>
    <property type="project" value="UniProtKB-KW"/>
</dbReference>
<dbReference type="GO" id="GO:0004103">
    <property type="term" value="F:choline kinase activity"/>
    <property type="evidence" value="ECO:0000315"/>
    <property type="project" value="MGI"/>
</dbReference>
<dbReference type="GO" id="GO:0004305">
    <property type="term" value="F:ethanolamine kinase activity"/>
    <property type="evidence" value="ECO:0007669"/>
    <property type="project" value="UniProtKB-EC"/>
</dbReference>
<dbReference type="GO" id="GO:0007517">
    <property type="term" value="P:muscle organ development"/>
    <property type="evidence" value="ECO:0000315"/>
    <property type="project" value="MGI"/>
</dbReference>
<dbReference type="GO" id="GO:0006656">
    <property type="term" value="P:phosphatidylcholine biosynthetic process"/>
    <property type="evidence" value="ECO:0000315"/>
    <property type="project" value="MGI"/>
</dbReference>
<dbReference type="GO" id="GO:0006646">
    <property type="term" value="P:phosphatidylethanolamine biosynthetic process"/>
    <property type="evidence" value="ECO:0000250"/>
    <property type="project" value="UniProtKB"/>
</dbReference>
<dbReference type="CDD" id="cd05156">
    <property type="entry name" value="ChoK_euk"/>
    <property type="match status" value="1"/>
</dbReference>
<dbReference type="FunFam" id="3.90.1200.10:FF:000005">
    <property type="entry name" value="Choline kinase alpha"/>
    <property type="match status" value="1"/>
</dbReference>
<dbReference type="Gene3D" id="3.90.1200.10">
    <property type="match status" value="1"/>
</dbReference>
<dbReference type="Gene3D" id="3.30.200.20">
    <property type="entry name" value="Phosphorylase Kinase, domain 1"/>
    <property type="match status" value="1"/>
</dbReference>
<dbReference type="InterPro" id="IPR011009">
    <property type="entry name" value="Kinase-like_dom_sf"/>
</dbReference>
<dbReference type="PANTHER" id="PTHR22603">
    <property type="entry name" value="CHOLINE/ETHANOALAMINE KINASE"/>
    <property type="match status" value="1"/>
</dbReference>
<dbReference type="PANTHER" id="PTHR22603:SF35">
    <property type="entry name" value="CHOLINE_ETHANOLAMINE KINASE"/>
    <property type="match status" value="1"/>
</dbReference>
<dbReference type="Pfam" id="PF01633">
    <property type="entry name" value="Choline_kinase"/>
    <property type="match status" value="1"/>
</dbReference>
<dbReference type="SUPFAM" id="SSF56112">
    <property type="entry name" value="Protein kinase-like (PK-like)"/>
    <property type="match status" value="1"/>
</dbReference>
<proteinExistence type="evidence at protein level"/>
<comment type="function">
    <text evidence="2">Has a key role in phospholipid metabolism, and catalyzes the first step of phosphatidylethanolamine and phosphatidylcholine biosynthesis.</text>
</comment>
<comment type="catalytic activity">
    <reaction evidence="2">
        <text>choline + ATP = phosphocholine + ADP + H(+)</text>
        <dbReference type="Rhea" id="RHEA:12837"/>
        <dbReference type="ChEBI" id="CHEBI:15354"/>
        <dbReference type="ChEBI" id="CHEBI:15378"/>
        <dbReference type="ChEBI" id="CHEBI:30616"/>
        <dbReference type="ChEBI" id="CHEBI:295975"/>
        <dbReference type="ChEBI" id="CHEBI:456216"/>
        <dbReference type="EC" id="2.7.1.32"/>
    </reaction>
    <physiologicalReaction direction="left-to-right" evidence="2">
        <dbReference type="Rhea" id="RHEA:12838"/>
    </physiologicalReaction>
</comment>
<comment type="catalytic activity">
    <reaction evidence="2">
        <text>ethanolamine + ATP = phosphoethanolamine + ADP + H(+)</text>
        <dbReference type="Rhea" id="RHEA:13069"/>
        <dbReference type="ChEBI" id="CHEBI:15378"/>
        <dbReference type="ChEBI" id="CHEBI:30616"/>
        <dbReference type="ChEBI" id="CHEBI:57603"/>
        <dbReference type="ChEBI" id="CHEBI:58190"/>
        <dbReference type="ChEBI" id="CHEBI:456216"/>
        <dbReference type="EC" id="2.7.1.82"/>
    </reaction>
    <physiologicalReaction direction="left-to-right" evidence="2">
        <dbReference type="Rhea" id="RHEA:13070"/>
    </physiologicalReaction>
</comment>
<comment type="pathway">
    <text evidence="2">Phospholipid metabolism; phosphatidylethanolamine biosynthesis; phosphatidylethanolamine from ethanolamine: step 1/3.</text>
</comment>
<comment type="subunit">
    <text evidence="5">Homodimer, and heterodimer with CHKA.</text>
</comment>
<comment type="tissue specificity">
    <text>Expressed ubiquitously with the highest level in testis.</text>
</comment>
<comment type="disease">
    <text evidence="4">Defects in Chkb are a cause of rostrocaudal muscular dystrophy (rmd). The disease is characterized by rapidly progressive muscular dystrophy and neonatal forelimb bone deformity. The dystrophy is only evident in skeletal muscle tissues in an unusual rostral-to-caudal gradient.</text>
</comment>
<comment type="disruption phenotype">
    <text evidence="6">Hindlimb muscular dystrophy. Hindlimb skeletal muscle tissue exhibits impaired phosphatidylcholine biosynthesis and increased phosphatidylcholine catabolism, with concomitant accumulation of choline. Mitochondria are abnormally large and exhibit decreased inner membrane potential.</text>
</comment>
<comment type="similarity">
    <text evidence="7">Belongs to the choline/ethanolamine kinase family.</text>
</comment>
<gene>
    <name type="primary">Chkb</name>
    <name type="synonym">Chetk</name>
    <name type="synonym">Chkl</name>
</gene>
<accession>O55229</accession>
<name>CHKB_MOUSE</name>